<keyword id="KW-1185">Reference proteome</keyword>
<protein>
    <recommendedName>
        <fullName>Uncharacterized protein dexA.1</fullName>
    </recommendedName>
    <alternativeName>
        <fullName>ORF1</fullName>
    </alternativeName>
</protein>
<reference key="1">
    <citation type="journal article" date="1987" name="Mol. Gen. Genet.">
        <title>The bacteriophage T4 dexA gene: sequence and analysis of a gene conditionally required for DNA replication.</title>
        <authorList>
            <person name="Gauss P."/>
            <person name="Gayle M."/>
            <person name="Winter R.B."/>
            <person name="Gold L."/>
        </authorList>
    </citation>
    <scope>NUCLEOTIDE SEQUENCE [GENOMIC DNA]</scope>
</reference>
<reference key="2">
    <citation type="journal article" date="2003" name="Microbiol. Mol. Biol. Rev.">
        <title>Bacteriophage T4 genome.</title>
        <authorList>
            <person name="Miller E.S."/>
            <person name="Kutter E."/>
            <person name="Mosig G."/>
            <person name="Arisaka F."/>
            <person name="Kunisawa T."/>
            <person name="Ruger W."/>
        </authorList>
    </citation>
    <scope>NUCLEOTIDE SEQUENCE [LARGE SCALE GENOMIC DNA]</scope>
</reference>
<gene>
    <name type="primary">y00G</name>
    <name type="synonym">dexA.1</name>
</gene>
<name>Y00G_BPT4</name>
<organism>
    <name type="scientific">Enterobacteria phage T4</name>
    <name type="common">Bacteriophage T4</name>
    <dbReference type="NCBI Taxonomy" id="10665"/>
    <lineage>
        <taxon>Viruses</taxon>
        <taxon>Duplodnaviria</taxon>
        <taxon>Heunggongvirae</taxon>
        <taxon>Uroviricota</taxon>
        <taxon>Caudoviricetes</taxon>
        <taxon>Straboviridae</taxon>
        <taxon>Tevenvirinae</taxon>
        <taxon>Tequatrovirus</taxon>
    </lineage>
</organism>
<proteinExistence type="predicted"/>
<dbReference type="EMBL" id="X04834">
    <property type="protein sequence ID" value="CAA28535.1"/>
    <property type="molecule type" value="Genomic_DNA"/>
</dbReference>
<dbReference type="EMBL" id="AF158101">
    <property type="protein sequence ID" value="AAD42565.1"/>
    <property type="molecule type" value="Genomic_DNA"/>
</dbReference>
<dbReference type="PIR" id="D32338">
    <property type="entry name" value="D32338"/>
</dbReference>
<dbReference type="RefSeq" id="NP_049630.1">
    <property type="nucleotide sequence ID" value="NC_000866.4"/>
</dbReference>
<dbReference type="SMR" id="P32285"/>
<dbReference type="GeneID" id="1258785"/>
<dbReference type="KEGG" id="vg:1258785"/>
<dbReference type="OrthoDB" id="20760at10239"/>
<dbReference type="Proteomes" id="UP000009087">
    <property type="component" value="Segment"/>
</dbReference>
<sequence>MIELSWYQFKSLMTNVKVVIQENPGPENITIREKASKIVYSLEEIQKDIESMAKFIDEPINKVYIQDYTVGQIRDLARKI</sequence>
<accession>P32285</accession>
<accession>Q9T0W2</accession>
<feature type="chain" id="PRO_0000165082" description="Uncharacterized protein dexA.1">
    <location>
        <begin position="1"/>
        <end position="80"/>
    </location>
</feature>
<organismHost>
    <name type="scientific">Escherichia coli</name>
    <dbReference type="NCBI Taxonomy" id="562"/>
</organismHost>